<feature type="chain" id="PRO_0000219597" description="HTH-type transcriptional regulator SarT">
    <location>
        <begin position="1"/>
        <end position="118"/>
    </location>
</feature>
<feature type="DNA-binding region" description="H-T-H motif" evidence="2">
    <location>
        <begin position="55"/>
        <end position="78"/>
    </location>
</feature>
<proteinExistence type="inferred from homology"/>
<protein>
    <recommendedName>
        <fullName>HTH-type transcriptional regulator SarT</fullName>
    </recommendedName>
    <alternativeName>
        <fullName>Staphylococcal accessory regulator T</fullName>
    </alternativeName>
</protein>
<reference key="1">
    <citation type="journal article" date="2005" name="J. Bacteriol.">
        <title>Insights on evolution of virulence and resistance from the complete genome analysis of an early methicillin-resistant Staphylococcus aureus strain and a biofilm-producing methicillin-resistant Staphylococcus epidermidis strain.</title>
        <authorList>
            <person name="Gill S.R."/>
            <person name="Fouts D.E."/>
            <person name="Archer G.L."/>
            <person name="Mongodin E.F."/>
            <person name="DeBoy R.T."/>
            <person name="Ravel J."/>
            <person name="Paulsen I.T."/>
            <person name="Kolonay J.F."/>
            <person name="Brinkac L.M."/>
            <person name="Beanan M.J."/>
            <person name="Dodson R.J."/>
            <person name="Daugherty S.C."/>
            <person name="Madupu R."/>
            <person name="Angiuoli S.V."/>
            <person name="Durkin A.S."/>
            <person name="Haft D.H."/>
            <person name="Vamathevan J.J."/>
            <person name="Khouri H."/>
            <person name="Utterback T.R."/>
            <person name="Lee C."/>
            <person name="Dimitrov G."/>
            <person name="Jiang L."/>
            <person name="Qin H."/>
            <person name="Weidman J."/>
            <person name="Tran K."/>
            <person name="Kang K.H."/>
            <person name="Hance I.R."/>
            <person name="Nelson K.E."/>
            <person name="Fraser C.M."/>
        </authorList>
    </citation>
    <scope>NUCLEOTIDE SEQUENCE [LARGE SCALE GENOMIC DNA]</scope>
    <source>
        <strain>COL</strain>
    </source>
</reference>
<keyword id="KW-0010">Activator</keyword>
<keyword id="KW-0963">Cytoplasm</keyword>
<keyword id="KW-0238">DNA-binding</keyword>
<keyword id="KW-0678">Repressor</keyword>
<keyword id="KW-0804">Transcription</keyword>
<keyword id="KW-0805">Transcription regulation</keyword>
<keyword id="KW-0843">Virulence</keyword>
<dbReference type="EMBL" id="CP000046">
    <property type="protein sequence ID" value="AAW37285.1"/>
    <property type="molecule type" value="Genomic_DNA"/>
</dbReference>
<dbReference type="RefSeq" id="WP_000998869.1">
    <property type="nucleotide sequence ID" value="NZ_JBGOFO010000001.1"/>
</dbReference>
<dbReference type="SMR" id="Q5HD56"/>
<dbReference type="KEGG" id="sac:SACOL2506"/>
<dbReference type="HOGENOM" id="CLU_2095348_0_0_9"/>
<dbReference type="Proteomes" id="UP000000530">
    <property type="component" value="Chromosome"/>
</dbReference>
<dbReference type="GO" id="GO:0005737">
    <property type="term" value="C:cytoplasm"/>
    <property type="evidence" value="ECO:0007669"/>
    <property type="project" value="UniProtKB-SubCell"/>
</dbReference>
<dbReference type="GO" id="GO:0003677">
    <property type="term" value="F:DNA binding"/>
    <property type="evidence" value="ECO:0007669"/>
    <property type="project" value="UniProtKB-KW"/>
</dbReference>
<dbReference type="GO" id="GO:0003700">
    <property type="term" value="F:DNA-binding transcription factor activity"/>
    <property type="evidence" value="ECO:0007669"/>
    <property type="project" value="InterPro"/>
</dbReference>
<dbReference type="GO" id="GO:0006950">
    <property type="term" value="P:response to stress"/>
    <property type="evidence" value="ECO:0007669"/>
    <property type="project" value="TreeGrafter"/>
</dbReference>
<dbReference type="Gene3D" id="1.10.10.10">
    <property type="entry name" value="Winged helix-like DNA-binding domain superfamily/Winged helix DNA-binding domain"/>
    <property type="match status" value="1"/>
</dbReference>
<dbReference type="InterPro" id="IPR039422">
    <property type="entry name" value="MarR/SlyA-like"/>
</dbReference>
<dbReference type="InterPro" id="IPR010166">
    <property type="entry name" value="SarA/Rot_dom"/>
</dbReference>
<dbReference type="InterPro" id="IPR055166">
    <property type="entry name" value="Transc_reg_Sar_Rot_HTH"/>
</dbReference>
<dbReference type="InterPro" id="IPR036388">
    <property type="entry name" value="WH-like_DNA-bd_sf"/>
</dbReference>
<dbReference type="InterPro" id="IPR036390">
    <property type="entry name" value="WH_DNA-bd_sf"/>
</dbReference>
<dbReference type="NCBIfam" id="TIGR01889">
    <property type="entry name" value="Staph_reg_Sar"/>
    <property type="match status" value="1"/>
</dbReference>
<dbReference type="PANTHER" id="PTHR33164:SF5">
    <property type="entry name" value="ORGANIC HYDROPEROXIDE RESISTANCE TRANSCRIPTIONAL REGULATOR"/>
    <property type="match status" value="1"/>
</dbReference>
<dbReference type="PANTHER" id="PTHR33164">
    <property type="entry name" value="TRANSCRIPTIONAL REGULATOR, MARR FAMILY"/>
    <property type="match status" value="1"/>
</dbReference>
<dbReference type="Pfam" id="PF22381">
    <property type="entry name" value="Staph_reg_Sar_Rot"/>
    <property type="match status" value="1"/>
</dbReference>
<dbReference type="SUPFAM" id="SSF46785">
    <property type="entry name" value="Winged helix' DNA-binding domain"/>
    <property type="match status" value="1"/>
</dbReference>
<name>SART_STAAC</name>
<accession>Q5HD56</accession>
<organism>
    <name type="scientific">Staphylococcus aureus (strain COL)</name>
    <dbReference type="NCBI Taxonomy" id="93062"/>
    <lineage>
        <taxon>Bacteria</taxon>
        <taxon>Bacillati</taxon>
        <taxon>Bacillota</taxon>
        <taxon>Bacilli</taxon>
        <taxon>Bacillales</taxon>
        <taxon>Staphylococcaceae</taxon>
        <taxon>Staphylococcus</taxon>
    </lineage>
</organism>
<sequence>MNDLKSKSNIKLMKRVLTTYELRKYLKKYFCLTLDNYLVLAYLDVFKNDEGKYFMRDIISYIGIDQSRIVKSVKDLSKKGYLNKCRDPHDSRNVIIVVSVKQHNYIKNLLSEININET</sequence>
<comment type="function">
    <text evidence="1">Transcriptional regulator acting as an intermediary between major regulators SarA and agr and virulence genes. Represses alpha-hemolysin (hla) gene expression (By similarity).</text>
</comment>
<comment type="subcellular location">
    <subcellularLocation>
        <location evidence="1">Cytoplasm</location>
    </subcellularLocation>
</comment>
<comment type="similarity">
    <text evidence="3">Belongs to the SarA family.</text>
</comment>
<evidence type="ECO:0000250" key="1"/>
<evidence type="ECO:0000255" key="2"/>
<evidence type="ECO:0000305" key="3"/>
<gene>
    <name type="primary">sarT</name>
    <name type="synonym">sarH3</name>
    <name type="ordered locus">SACOL2506</name>
</gene>